<accession>P80318</accession>
<protein>
    <recommendedName>
        <fullName>T-complex protein 1 subunit gamma</fullName>
        <shortName>TCP-1-gamma</shortName>
        <ecNumber evidence="1">3.6.1.-</ecNumber>
    </recommendedName>
    <alternativeName>
        <fullName>CCT-gamma</fullName>
    </alternativeName>
    <alternativeName>
        <fullName>Matricin</fullName>
    </alternativeName>
    <alternativeName>
        <fullName>mTRiC-P5</fullName>
    </alternativeName>
</protein>
<evidence type="ECO:0000250" key="1">
    <source>
        <dbReference type="UniProtKB" id="P49368"/>
    </source>
</evidence>
<evidence type="ECO:0000256" key="2">
    <source>
        <dbReference type="SAM" id="MobiDB-lite"/>
    </source>
</evidence>
<evidence type="ECO:0000269" key="3">
    <source>
    </source>
</evidence>
<evidence type="ECO:0000305" key="4"/>
<evidence type="ECO:0007744" key="5">
    <source>
    </source>
</evidence>
<evidence type="ECO:0007829" key="6">
    <source>
        <dbReference type="PDB" id="1GML"/>
    </source>
</evidence>
<gene>
    <name type="primary">Cct3</name>
    <name type="synonym">Cctg</name>
</gene>
<proteinExistence type="evidence at protein level"/>
<feature type="chain" id="PRO_0000128322" description="T-complex protein 1 subunit gamma">
    <location>
        <begin position="1"/>
        <end position="545"/>
    </location>
</feature>
<feature type="region of interest" description="Disordered" evidence="2">
    <location>
        <begin position="1"/>
        <end position="24"/>
    </location>
</feature>
<feature type="region of interest" description="Disordered" evidence="2">
    <location>
        <begin position="526"/>
        <end position="545"/>
    </location>
</feature>
<feature type="binding site" evidence="1">
    <location>
        <position position="42"/>
    </location>
    <ligand>
        <name>ADP</name>
        <dbReference type="ChEBI" id="CHEBI:456216"/>
    </ligand>
</feature>
<feature type="binding site" evidence="1">
    <location>
        <position position="42"/>
    </location>
    <ligand>
        <name>ATP</name>
        <dbReference type="ChEBI" id="CHEBI:30616"/>
    </ligand>
</feature>
<feature type="binding site" evidence="1">
    <location>
        <position position="93"/>
    </location>
    <ligand>
        <name>Mg(2+)</name>
        <dbReference type="ChEBI" id="CHEBI:18420"/>
    </ligand>
</feature>
<feature type="binding site" evidence="1">
    <location>
        <position position="94"/>
    </location>
    <ligand>
        <name>ADP</name>
        <dbReference type="ChEBI" id="CHEBI:456216"/>
    </ligand>
</feature>
<feature type="binding site" evidence="1">
    <location>
        <position position="94"/>
    </location>
    <ligand>
        <name>ATP</name>
        <dbReference type="ChEBI" id="CHEBI:30616"/>
    </ligand>
</feature>
<feature type="binding site" evidence="1">
    <location>
        <position position="95"/>
    </location>
    <ligand>
        <name>ADP</name>
        <dbReference type="ChEBI" id="CHEBI:456216"/>
    </ligand>
</feature>
<feature type="binding site" evidence="1">
    <location>
        <position position="95"/>
    </location>
    <ligand>
        <name>ATP</name>
        <dbReference type="ChEBI" id="CHEBI:30616"/>
    </ligand>
</feature>
<feature type="binding site" evidence="1">
    <location>
        <position position="96"/>
    </location>
    <ligand>
        <name>ADP</name>
        <dbReference type="ChEBI" id="CHEBI:456216"/>
    </ligand>
</feature>
<feature type="binding site" evidence="1">
    <location>
        <position position="96"/>
    </location>
    <ligand>
        <name>ATP</name>
        <dbReference type="ChEBI" id="CHEBI:30616"/>
    </ligand>
</feature>
<feature type="binding site" evidence="1">
    <location>
        <position position="97"/>
    </location>
    <ligand>
        <name>ADP</name>
        <dbReference type="ChEBI" id="CHEBI:456216"/>
    </ligand>
</feature>
<feature type="binding site" evidence="1">
    <location>
        <position position="162"/>
    </location>
    <ligand>
        <name>ADP</name>
        <dbReference type="ChEBI" id="CHEBI:456216"/>
    </ligand>
</feature>
<feature type="binding site" evidence="1">
    <location>
        <position position="163"/>
    </location>
    <ligand>
        <name>ADP</name>
        <dbReference type="ChEBI" id="CHEBI:456216"/>
    </ligand>
</feature>
<feature type="binding site" evidence="1">
    <location>
        <position position="411"/>
    </location>
    <ligand>
        <name>ADP</name>
        <dbReference type="ChEBI" id="CHEBI:456216"/>
    </ligand>
</feature>
<feature type="binding site" evidence="1">
    <location>
        <position position="411"/>
    </location>
    <ligand>
        <name>ATP</name>
        <dbReference type="ChEBI" id="CHEBI:30616"/>
    </ligand>
</feature>
<feature type="binding site" evidence="1">
    <location>
        <position position="482"/>
    </location>
    <ligand>
        <name>ADP</name>
        <dbReference type="ChEBI" id="CHEBI:456216"/>
    </ligand>
</feature>
<feature type="binding site" evidence="1">
    <location>
        <position position="482"/>
    </location>
    <ligand>
        <name>ATP</name>
        <dbReference type="ChEBI" id="CHEBI:30616"/>
    </ligand>
</feature>
<feature type="binding site" evidence="1">
    <location>
        <position position="483"/>
    </location>
    <ligand>
        <name>ADP</name>
        <dbReference type="ChEBI" id="CHEBI:456216"/>
    </ligand>
</feature>
<feature type="binding site" evidence="1">
    <location>
        <position position="497"/>
    </location>
    <ligand>
        <name>ADP</name>
        <dbReference type="ChEBI" id="CHEBI:456216"/>
    </ligand>
</feature>
<feature type="binding site" evidence="1">
    <location>
        <position position="497"/>
    </location>
    <ligand>
        <name>ATP</name>
        <dbReference type="ChEBI" id="CHEBI:30616"/>
    </ligand>
</feature>
<feature type="binding site" evidence="1">
    <location>
        <position position="502"/>
    </location>
    <ligand>
        <name>ADP</name>
        <dbReference type="ChEBI" id="CHEBI:456216"/>
    </ligand>
</feature>
<feature type="modified residue" description="N-acetylmethionine" evidence="1">
    <location>
        <position position="1"/>
    </location>
</feature>
<feature type="modified residue" description="Phosphoserine" evidence="1">
    <location>
        <position position="11"/>
    </location>
</feature>
<feature type="modified residue" description="Phosphoserine" evidence="5">
    <location>
        <position position="170"/>
    </location>
</feature>
<feature type="modified residue" description="N6-acetyllysine" evidence="1">
    <location>
        <position position="222"/>
    </location>
</feature>
<feature type="modified residue" description="Phosphoserine" evidence="1">
    <location>
        <position position="243"/>
    </location>
</feature>
<feature type="modified residue" description="Phosphoserine" evidence="1">
    <location>
        <position position="244"/>
    </location>
</feature>
<feature type="modified residue" description="Phosphotyrosine" evidence="1">
    <location>
        <position position="247"/>
    </location>
</feature>
<feature type="modified residue" description="Phosphoserine" evidence="5">
    <location>
        <position position="252"/>
    </location>
</feature>
<feature type="modified residue" description="Phosphothreonine" evidence="1">
    <location>
        <position position="430"/>
    </location>
</feature>
<feature type="modified residue" description="Phosphothreonine" evidence="1">
    <location>
        <position position="459"/>
    </location>
</feature>
<feature type="disulfide bond">
    <location>
        <begin position="366"/>
        <end position="372"/>
    </location>
</feature>
<feature type="cross-link" description="Glycyl lysine isopeptide (Lys-Gly) (interchain with G-Cter in SUMO2)" evidence="1">
    <location>
        <position position="15"/>
    </location>
</feature>
<feature type="cross-link" description="Glycyl lysine isopeptide (Lys-Gly) (interchain with G-Cter in SUMO2)" evidence="1">
    <location>
        <position position="248"/>
    </location>
</feature>
<feature type="cross-link" description="Glycyl lysine isopeptide (Lys-Gly) (interchain with G-Cter in SUMO2)" evidence="1">
    <location>
        <position position="249"/>
    </location>
</feature>
<feature type="cross-link" description="Glycyl lysine isopeptide (Lys-Gly) (interchain with G-Cter in SUMO2)" evidence="1">
    <location>
        <position position="381"/>
    </location>
</feature>
<feature type="sequence conflict" description="In Ref. 2; AAA19749." evidence="4" ref="2">
    <original>S</original>
    <variation>G</variation>
    <location>
        <position position="124"/>
    </location>
</feature>
<feature type="sequence conflict" description="In Ref. 2; AAA19749." evidence="4" ref="2">
    <original>E</original>
    <variation>D</variation>
    <location>
        <position position="150"/>
    </location>
</feature>
<feature type="sequence conflict" description="In Ref. 2; AAA19749." evidence="4" ref="2">
    <original>S</original>
    <variation>N</variation>
    <location>
        <position position="154"/>
    </location>
</feature>
<feature type="sequence conflict" description="In Ref. 2; AAA19749." evidence="4" ref="2">
    <original>H</original>
    <variation>Q</variation>
    <location>
        <position position="276"/>
    </location>
</feature>
<feature type="sequence conflict" description="In Ref. 2; AAA19749." evidence="4" ref="2">
    <original>D</original>
    <variation>E</variation>
    <location>
        <position position="365"/>
    </location>
</feature>
<feature type="sequence conflict" description="In Ref. 2; AAA19749." evidence="4" ref="2">
    <original>S</original>
    <variation>N</variation>
    <location>
        <position position="474"/>
    </location>
</feature>
<feature type="sequence conflict" description="In Ref. 2; AAA19749." evidence="4" ref="2">
    <original>N</original>
    <variation>S</variation>
    <location>
        <position position="534"/>
    </location>
</feature>
<feature type="sequence conflict" description="In Ref. 2; AAA19749." evidence="4" ref="2">
    <original>TG</original>
    <variation>SS</variation>
    <location>
        <begin position="537"/>
        <end position="538"/>
    </location>
</feature>
<feature type="sequence conflict" description="In Ref. 2; AAA19749." evidence="4" ref="2">
    <original>A</original>
    <variation>G</variation>
    <location>
        <position position="542"/>
    </location>
</feature>
<feature type="strand" evidence="6">
    <location>
        <begin position="213"/>
        <end position="221"/>
    </location>
</feature>
<feature type="strand" evidence="6">
    <location>
        <begin position="232"/>
        <end position="235"/>
    </location>
</feature>
<feature type="strand" evidence="6">
    <location>
        <begin position="238"/>
        <end position="243"/>
    </location>
</feature>
<feature type="helix" evidence="6">
    <location>
        <begin position="264"/>
        <end position="283"/>
    </location>
</feature>
<feature type="strand" evidence="6">
    <location>
        <begin position="288"/>
        <end position="294"/>
    </location>
</feature>
<feature type="helix" evidence="6">
    <location>
        <begin position="298"/>
        <end position="306"/>
    </location>
</feature>
<feature type="strand" evidence="6">
    <location>
        <begin position="310"/>
        <end position="312"/>
    </location>
</feature>
<feature type="helix" evidence="6">
    <location>
        <begin position="317"/>
        <end position="327"/>
    </location>
</feature>
<feature type="strand" evidence="6">
    <location>
        <begin position="331"/>
        <end position="333"/>
    </location>
</feature>
<feature type="helix" evidence="6">
    <location>
        <begin position="335"/>
        <end position="337"/>
    </location>
</feature>
<feature type="helix" evidence="6">
    <location>
        <begin position="340"/>
        <end position="342"/>
    </location>
</feature>
<feature type="strand" evidence="6">
    <location>
        <begin position="347"/>
        <end position="355"/>
    </location>
</feature>
<feature type="strand" evidence="6">
    <location>
        <begin position="358"/>
        <end position="368"/>
    </location>
</feature>
<feature type="strand" evidence="6">
    <location>
        <begin position="373"/>
        <end position="377"/>
    </location>
</feature>
<dbReference type="EC" id="3.6.1.-" evidence="1"/>
<dbReference type="EMBL" id="Z31556">
    <property type="protein sequence ID" value="CAA83431.1"/>
    <property type="molecule type" value="mRNA"/>
</dbReference>
<dbReference type="EMBL" id="L20509">
    <property type="protein sequence ID" value="AAA19749.1"/>
    <property type="status" value="ALT_INIT"/>
    <property type="molecule type" value="mRNA"/>
</dbReference>
<dbReference type="CCDS" id="CCDS17468.1"/>
<dbReference type="PIR" id="S42723">
    <property type="entry name" value="S42723"/>
</dbReference>
<dbReference type="PIR" id="S43062">
    <property type="entry name" value="S43062"/>
</dbReference>
<dbReference type="RefSeq" id="NP_033966.1">
    <property type="nucleotide sequence ID" value="NM_009836.1"/>
</dbReference>
<dbReference type="PDB" id="1GML">
    <property type="method" value="X-ray"/>
    <property type="resolution" value="2.20 A"/>
    <property type="chains" value="A/B/C/D=210-380"/>
</dbReference>
<dbReference type="PDB" id="1GN1">
    <property type="method" value="X-ray"/>
    <property type="resolution" value="2.80 A"/>
    <property type="chains" value="A/B/C/D/E/F/G/H=210-380"/>
</dbReference>
<dbReference type="PDBsum" id="1GML"/>
<dbReference type="PDBsum" id="1GN1"/>
<dbReference type="SMR" id="P80318"/>
<dbReference type="BioGRID" id="198565">
    <property type="interactions" value="95"/>
</dbReference>
<dbReference type="CORUM" id="P80318"/>
<dbReference type="DIP" id="DIP-32344N"/>
<dbReference type="FunCoup" id="P80318">
    <property type="interactions" value="3017"/>
</dbReference>
<dbReference type="IntAct" id="P80318">
    <property type="interactions" value="60"/>
</dbReference>
<dbReference type="MINT" id="P80318"/>
<dbReference type="STRING" id="10090.ENSMUSP00000001452"/>
<dbReference type="GlyGen" id="P80318">
    <property type="glycosylation" value="2 sites, 1 N-linked glycan (1 site), 1 O-linked glycan (1 site)"/>
</dbReference>
<dbReference type="iPTMnet" id="P80318"/>
<dbReference type="MetOSite" id="P80318"/>
<dbReference type="PhosphoSitePlus" id="P80318"/>
<dbReference type="SwissPalm" id="P80318"/>
<dbReference type="REPRODUCTION-2DPAGE" id="IPI00116283"/>
<dbReference type="REPRODUCTION-2DPAGE" id="P80318"/>
<dbReference type="jPOST" id="P80318"/>
<dbReference type="PaxDb" id="10090-ENSMUSP00000001452"/>
<dbReference type="PeptideAtlas" id="P80318"/>
<dbReference type="ProteomicsDB" id="259364"/>
<dbReference type="Pumba" id="P80318"/>
<dbReference type="Antibodypedia" id="1677">
    <property type="antibodies" value="249 antibodies from 33 providers"/>
</dbReference>
<dbReference type="DNASU" id="12462"/>
<dbReference type="Ensembl" id="ENSMUST00000001452.14">
    <property type="protein sequence ID" value="ENSMUSP00000001452.8"/>
    <property type="gene ID" value="ENSMUSG00000001416.14"/>
</dbReference>
<dbReference type="GeneID" id="12462"/>
<dbReference type="KEGG" id="mmu:12462"/>
<dbReference type="UCSC" id="uc008puo.3">
    <property type="organism name" value="mouse"/>
</dbReference>
<dbReference type="AGR" id="MGI:104708"/>
<dbReference type="CTD" id="7203"/>
<dbReference type="MGI" id="MGI:104708">
    <property type="gene designation" value="Cct3"/>
</dbReference>
<dbReference type="VEuPathDB" id="HostDB:ENSMUSG00000001416"/>
<dbReference type="eggNOG" id="KOG0364">
    <property type="taxonomic scope" value="Eukaryota"/>
</dbReference>
<dbReference type="GeneTree" id="ENSGT00570000079224"/>
<dbReference type="HOGENOM" id="CLU_008891_7_3_1"/>
<dbReference type="InParanoid" id="P80318"/>
<dbReference type="OMA" id="CGGSTIR"/>
<dbReference type="OrthoDB" id="275057at2759"/>
<dbReference type="PhylomeDB" id="P80318"/>
<dbReference type="TreeFam" id="TF105649"/>
<dbReference type="BRENDA" id="3.6.4.B10">
    <property type="organism ID" value="3474"/>
</dbReference>
<dbReference type="Reactome" id="R-MMU-390471">
    <property type="pathway name" value="Association of TriC/CCT with target proteins during biosynthesis"/>
</dbReference>
<dbReference type="Reactome" id="R-MMU-6814122">
    <property type="pathway name" value="Cooperation of PDCL (PhLP1) and TRiC/CCT in G-protein beta folding"/>
</dbReference>
<dbReference type="BioGRID-ORCS" id="12462">
    <property type="hits" value="33 hits in 78 CRISPR screens"/>
</dbReference>
<dbReference type="CD-CODE" id="CE726F99">
    <property type="entry name" value="Postsynaptic density"/>
</dbReference>
<dbReference type="ChiTaRS" id="Cct3">
    <property type="organism name" value="mouse"/>
</dbReference>
<dbReference type="EvolutionaryTrace" id="P80318"/>
<dbReference type="PRO" id="PR:P80318"/>
<dbReference type="Proteomes" id="UP000000589">
    <property type="component" value="Chromosome 3"/>
</dbReference>
<dbReference type="RNAct" id="P80318">
    <property type="molecule type" value="protein"/>
</dbReference>
<dbReference type="Bgee" id="ENSMUSG00000001416">
    <property type="expression patterns" value="Expressed in primitive streak and 267 other cell types or tissues"/>
</dbReference>
<dbReference type="ExpressionAtlas" id="P80318">
    <property type="expression patterns" value="baseline and differential"/>
</dbReference>
<dbReference type="GO" id="GO:0044297">
    <property type="term" value="C:cell body"/>
    <property type="evidence" value="ECO:0000314"/>
    <property type="project" value="MGI"/>
</dbReference>
<dbReference type="GO" id="GO:0005832">
    <property type="term" value="C:chaperonin-containing T-complex"/>
    <property type="evidence" value="ECO:0000314"/>
    <property type="project" value="MGI"/>
</dbReference>
<dbReference type="GO" id="GO:0005874">
    <property type="term" value="C:microtubule"/>
    <property type="evidence" value="ECO:0007669"/>
    <property type="project" value="Ensembl"/>
</dbReference>
<dbReference type="GO" id="GO:0043209">
    <property type="term" value="C:myelin sheath"/>
    <property type="evidence" value="ECO:0007005"/>
    <property type="project" value="UniProtKB"/>
</dbReference>
<dbReference type="GO" id="GO:0002199">
    <property type="term" value="C:zona pellucida receptor complex"/>
    <property type="evidence" value="ECO:0000314"/>
    <property type="project" value="MGI"/>
</dbReference>
<dbReference type="GO" id="GO:0005524">
    <property type="term" value="F:ATP binding"/>
    <property type="evidence" value="ECO:0007669"/>
    <property type="project" value="UniProtKB-KW"/>
</dbReference>
<dbReference type="GO" id="GO:0016887">
    <property type="term" value="F:ATP hydrolysis activity"/>
    <property type="evidence" value="ECO:0007669"/>
    <property type="project" value="InterPro"/>
</dbReference>
<dbReference type="GO" id="GO:0140662">
    <property type="term" value="F:ATP-dependent protein folding chaperone"/>
    <property type="evidence" value="ECO:0007669"/>
    <property type="project" value="InterPro"/>
</dbReference>
<dbReference type="GO" id="GO:0051082">
    <property type="term" value="F:unfolded protein binding"/>
    <property type="evidence" value="ECO:0007669"/>
    <property type="project" value="InterPro"/>
</dbReference>
<dbReference type="GO" id="GO:0007339">
    <property type="term" value="P:binding of sperm to zona pellucida"/>
    <property type="evidence" value="ECO:0000314"/>
    <property type="project" value="MGI"/>
</dbReference>
<dbReference type="GO" id="GO:0051086">
    <property type="term" value="P:chaperone mediated protein folding independent of cofactor"/>
    <property type="evidence" value="ECO:0007669"/>
    <property type="project" value="Ensembl"/>
</dbReference>
<dbReference type="GO" id="GO:0032212">
    <property type="term" value="P:positive regulation of telomere maintenance via telomerase"/>
    <property type="evidence" value="ECO:0007669"/>
    <property type="project" value="Ensembl"/>
</dbReference>
<dbReference type="GO" id="GO:0050821">
    <property type="term" value="P:protein stabilization"/>
    <property type="evidence" value="ECO:0007669"/>
    <property type="project" value="Ensembl"/>
</dbReference>
<dbReference type="CDD" id="cd03337">
    <property type="entry name" value="TCP1_gamma"/>
    <property type="match status" value="1"/>
</dbReference>
<dbReference type="FunFam" id="1.10.560.10:FF:000069">
    <property type="entry name" value="T-complex protein 1 subunit gamma"/>
    <property type="match status" value="1"/>
</dbReference>
<dbReference type="FunFam" id="1.10.560.10:FF:000076">
    <property type="entry name" value="T-complex protein 1 subunit gamma"/>
    <property type="match status" value="1"/>
</dbReference>
<dbReference type="FunFam" id="3.50.7.10:FF:000005">
    <property type="entry name" value="T-complex protein 1 subunit gamma"/>
    <property type="match status" value="1"/>
</dbReference>
<dbReference type="Gene3D" id="3.50.7.10">
    <property type="entry name" value="GroEL"/>
    <property type="match status" value="1"/>
</dbReference>
<dbReference type="Gene3D" id="1.10.560.10">
    <property type="entry name" value="GroEL-like equatorial domain"/>
    <property type="match status" value="1"/>
</dbReference>
<dbReference type="Gene3D" id="3.30.260.10">
    <property type="entry name" value="TCP-1-like chaperonin intermediate domain"/>
    <property type="match status" value="1"/>
</dbReference>
<dbReference type="InterPro" id="IPR012719">
    <property type="entry name" value="Chap_CCT_gamma"/>
</dbReference>
<dbReference type="InterPro" id="IPR017998">
    <property type="entry name" value="Chaperone_TCP-1"/>
</dbReference>
<dbReference type="InterPro" id="IPR002194">
    <property type="entry name" value="Chaperonin_TCP-1_CS"/>
</dbReference>
<dbReference type="InterPro" id="IPR002423">
    <property type="entry name" value="Cpn60/GroEL/TCP-1"/>
</dbReference>
<dbReference type="InterPro" id="IPR027409">
    <property type="entry name" value="GroEL-like_apical_dom_sf"/>
</dbReference>
<dbReference type="InterPro" id="IPR027413">
    <property type="entry name" value="GROEL-like_equatorial_sf"/>
</dbReference>
<dbReference type="InterPro" id="IPR027410">
    <property type="entry name" value="TCP-1-like_intermed_sf"/>
</dbReference>
<dbReference type="InterPro" id="IPR053374">
    <property type="entry name" value="TCP-1_chaperonin"/>
</dbReference>
<dbReference type="InterPro" id="IPR054827">
    <property type="entry name" value="thermosome_alpha"/>
</dbReference>
<dbReference type="NCBIfam" id="TIGR02344">
    <property type="entry name" value="chap_CCT_gamma"/>
    <property type="match status" value="1"/>
</dbReference>
<dbReference type="NCBIfam" id="NF041082">
    <property type="entry name" value="thermosome_alpha"/>
    <property type="match status" value="1"/>
</dbReference>
<dbReference type="NCBIfam" id="NF041083">
    <property type="entry name" value="thermosome_beta"/>
    <property type="match status" value="1"/>
</dbReference>
<dbReference type="PANTHER" id="PTHR11353">
    <property type="entry name" value="CHAPERONIN"/>
    <property type="match status" value="1"/>
</dbReference>
<dbReference type="Pfam" id="PF00118">
    <property type="entry name" value="Cpn60_TCP1"/>
    <property type="match status" value="1"/>
</dbReference>
<dbReference type="PRINTS" id="PR00304">
    <property type="entry name" value="TCOMPLEXTCP1"/>
</dbReference>
<dbReference type="SUPFAM" id="SSF52029">
    <property type="entry name" value="GroEL apical domain-like"/>
    <property type="match status" value="1"/>
</dbReference>
<dbReference type="SUPFAM" id="SSF48592">
    <property type="entry name" value="GroEL equatorial domain-like"/>
    <property type="match status" value="1"/>
</dbReference>
<dbReference type="SUPFAM" id="SSF54849">
    <property type="entry name" value="GroEL-intermediate domain like"/>
    <property type="match status" value="1"/>
</dbReference>
<dbReference type="PROSITE" id="PS00750">
    <property type="entry name" value="TCP1_1"/>
    <property type="match status" value="1"/>
</dbReference>
<dbReference type="PROSITE" id="PS00751">
    <property type="entry name" value="TCP1_2"/>
    <property type="match status" value="1"/>
</dbReference>
<dbReference type="PROSITE" id="PS00995">
    <property type="entry name" value="TCP1_3"/>
    <property type="match status" value="1"/>
</dbReference>
<comment type="function">
    <text evidence="1">Component of the chaperonin-containing T-complex (TRiC), a molecular chaperone complex that assists the folding of actin, tubulin and other proteins upon ATP hydrolysis. The TRiC complex mediates the folding of WRAP53/TCAB1, thereby regulating telomere maintenance. As part of the TRiC complex may play a role in the assembly of BBSome, a complex involved in ciliogenesis regulating transports vesicles to the cilia.</text>
</comment>
<comment type="catalytic activity">
    <reaction evidence="1">
        <text>ATP + H2O = ADP + phosphate + H(+)</text>
        <dbReference type="Rhea" id="RHEA:13065"/>
        <dbReference type="ChEBI" id="CHEBI:15377"/>
        <dbReference type="ChEBI" id="CHEBI:15378"/>
        <dbReference type="ChEBI" id="CHEBI:30616"/>
        <dbReference type="ChEBI" id="CHEBI:43474"/>
        <dbReference type="ChEBI" id="CHEBI:456216"/>
    </reaction>
</comment>
<comment type="subunit">
    <text evidence="1 3">Component of the chaperonin-containing T-complex (TRiC), a hexadecamer composed of two identical back-to-back stacked rings enclosing a protein folding chamber. Each ring is made up of eight different subunits: TCP1/CCT1, CCT2, CCT3, CCT4, CCT5, CCT6A/CCT6, CCT7, CCT8 (By similarity). Interacts with PACRG (By similarity). Interacts with DNAAF4 (PubMed:23872636). Interacts with DLEC1 (By similarity).</text>
</comment>
<comment type="interaction">
    <interactant intactId="EBI-772361">
        <id>P80318</id>
    </interactant>
    <interactant intactId="EBI-10634977">
        <id>PRO_0000038598</id>
        <label>gag</label>
        <dbReference type="UniProtKB" id="P04591"/>
    </interactant>
    <organismsDiffer>true</organismsDiffer>
    <experiments>3</experiments>
</comment>
<comment type="subcellular location">
    <subcellularLocation>
        <location evidence="4">Cytoplasm</location>
    </subcellularLocation>
</comment>
<comment type="PTM">
    <text>The N-terminus is blocked.</text>
</comment>
<comment type="similarity">
    <text evidence="4">Belongs to the TCP-1 chaperonin family.</text>
</comment>
<comment type="sequence caution" evidence="4">
    <conflict type="erroneous initiation">
        <sequence resource="EMBL-CDS" id="AAA19749"/>
    </conflict>
</comment>
<name>TCPG_MOUSE</name>
<keyword id="KW-0002">3D-structure</keyword>
<keyword id="KW-0007">Acetylation</keyword>
<keyword id="KW-0067">ATP-binding</keyword>
<keyword id="KW-0143">Chaperone</keyword>
<keyword id="KW-0963">Cytoplasm</keyword>
<keyword id="KW-0903">Direct protein sequencing</keyword>
<keyword id="KW-1015">Disulfide bond</keyword>
<keyword id="KW-0378">Hydrolase</keyword>
<keyword id="KW-1017">Isopeptide bond</keyword>
<keyword id="KW-0460">Magnesium</keyword>
<keyword id="KW-0479">Metal-binding</keyword>
<keyword id="KW-0547">Nucleotide-binding</keyword>
<keyword id="KW-0597">Phosphoprotein</keyword>
<keyword id="KW-1185">Reference proteome</keyword>
<keyword id="KW-0832">Ubl conjugation</keyword>
<organism>
    <name type="scientific">Mus musculus</name>
    <name type="common">Mouse</name>
    <dbReference type="NCBI Taxonomy" id="10090"/>
    <lineage>
        <taxon>Eukaryota</taxon>
        <taxon>Metazoa</taxon>
        <taxon>Chordata</taxon>
        <taxon>Craniata</taxon>
        <taxon>Vertebrata</taxon>
        <taxon>Euteleostomi</taxon>
        <taxon>Mammalia</taxon>
        <taxon>Eutheria</taxon>
        <taxon>Euarchontoglires</taxon>
        <taxon>Glires</taxon>
        <taxon>Rodentia</taxon>
        <taxon>Myomorpha</taxon>
        <taxon>Muroidea</taxon>
        <taxon>Muridae</taxon>
        <taxon>Murinae</taxon>
        <taxon>Mus</taxon>
        <taxon>Mus</taxon>
    </lineage>
</organism>
<reference key="1">
    <citation type="journal article" date="1994" name="Curr. Biol.">
        <title>Identification of six Tcp-1-related genes encoding divergent subunits of the TCP-1-containing chaperonin.</title>
        <authorList>
            <person name="Kubota H."/>
            <person name="Hynes G."/>
            <person name="Carne A."/>
            <person name="Ashworth A."/>
            <person name="Willison K.R."/>
        </authorList>
    </citation>
    <scope>NUCLEOTIDE SEQUENCE [MRNA]</scope>
    <scope>PARTIAL PROTEIN SEQUENCE</scope>
    <source>
        <strain>129/Sv</strain>
    </source>
</reference>
<reference key="2">
    <citation type="journal article" date="1994" name="Biochim. Biophys. Acta">
        <title>cDNA encoding a novel TCP1-related protein.</title>
        <authorList>
            <person name="Joly E.C."/>
            <person name="Sevigny G."/>
            <person name="Todorov I.T."/>
            <person name="Bibor-Hardy V."/>
        </authorList>
    </citation>
    <scope>NUCLEOTIDE SEQUENCE [MRNA]</scope>
</reference>
<reference key="3">
    <citation type="submission" date="2007-04" db="UniProtKB">
        <authorList>
            <person name="Lubec G."/>
            <person name="Kang S.U."/>
        </authorList>
    </citation>
    <scope>PROTEIN SEQUENCE OF 32-38; 128-138; 150-163; 204-216; 238-248; 428-461; 492-502 AND 508-518</scope>
    <scope>IDENTIFICATION BY MASS SPECTROMETRY</scope>
    <source>
        <strain>C57BL/6J</strain>
        <tissue>Brain</tissue>
    </source>
</reference>
<reference key="4">
    <citation type="journal article" date="2010" name="Cell">
        <title>A tissue-specific atlas of mouse protein phosphorylation and expression.</title>
        <authorList>
            <person name="Huttlin E.L."/>
            <person name="Jedrychowski M.P."/>
            <person name="Elias J.E."/>
            <person name="Goswami T."/>
            <person name="Rad R."/>
            <person name="Beausoleil S.A."/>
            <person name="Villen J."/>
            <person name="Haas W."/>
            <person name="Sowa M.E."/>
            <person name="Gygi S.P."/>
        </authorList>
    </citation>
    <scope>PHOSPHORYLATION [LARGE SCALE ANALYSIS] AT SER-170 AND SER-252</scope>
    <scope>IDENTIFICATION BY MASS SPECTROMETRY [LARGE SCALE ANALYSIS]</scope>
    <source>
        <tissue>Brain</tissue>
        <tissue>Brown adipose tissue</tissue>
        <tissue>Heart</tissue>
        <tissue>Kidney</tissue>
        <tissue>Liver</tissue>
        <tissue>Lung</tissue>
        <tissue>Pancreas</tissue>
        <tissue>Spleen</tissue>
        <tissue>Testis</tissue>
    </source>
</reference>
<reference key="5">
    <citation type="journal article" date="2002" name="J. Mol. Biol.">
        <title>Crystal structure of the CCTgamma apical domain: implications for substrate binding to the eukaryotic cytosolic chaperonin.</title>
        <authorList>
            <person name="Pappenberger G."/>
            <person name="Wilsher J.A."/>
            <person name="Roe S.M."/>
            <person name="Counsell D.J."/>
            <person name="Willison K.R."/>
            <person name="Pearl L.H."/>
        </authorList>
    </citation>
    <scope>X-RAY CRYSTALLOGRAPHY (2.2 ANGSTROMS) OF 210-386</scope>
</reference>
<reference key="6">
    <citation type="journal article" date="2013" name="Nat. Genet.">
        <title>DYX1C1 is required for axonemal dynein assembly and ciliary motility.</title>
        <authorList>
            <person name="Tarkar A."/>
            <person name="Loges N.T."/>
            <person name="Slagle C.E."/>
            <person name="Francis R."/>
            <person name="Dougherty G.W."/>
            <person name="Tamayo J.V."/>
            <person name="Shook B."/>
            <person name="Cantino M."/>
            <person name="Schwartz D."/>
            <person name="Jahnke C."/>
            <person name="Olbrich H."/>
            <person name="Werner C."/>
            <person name="Raidt J."/>
            <person name="Pennekamp P."/>
            <person name="Abouhamed M."/>
            <person name="Hjeij R."/>
            <person name="Kohler G."/>
            <person name="Griese M."/>
            <person name="Li Y."/>
            <person name="Lemke K."/>
            <person name="Klena N."/>
            <person name="Liu X."/>
            <person name="Gabriel G."/>
            <person name="Tobita K."/>
            <person name="Jaspers M."/>
            <person name="Morgan L.C."/>
            <person name="Shapiro A.J."/>
            <person name="Letteboer S.J."/>
            <person name="Mans D.A."/>
            <person name="Carson J.L."/>
            <person name="Leigh M.W."/>
            <person name="Wolf W.E."/>
            <person name="Chen S."/>
            <person name="Lucas J.S."/>
            <person name="Onoufriadis A."/>
            <person name="Plagnol V."/>
            <person name="Schmidts M."/>
            <person name="Boldt K."/>
            <person name="Roepman R."/>
            <person name="Zariwala M.A."/>
            <person name="Lo C.W."/>
            <person name="Mitchison H.M."/>
            <person name="Knowles M.R."/>
            <person name="Burdine R.D."/>
            <person name="Loturco J.J."/>
            <person name="Omran H."/>
        </authorList>
    </citation>
    <scope>INTERACTION WITH DNAAF4</scope>
</reference>
<sequence length="545" mass="60630">MMGHRPVLVLSQNTKRESGRKVQSGNINAAKTIADIIRTCLGPKSMMKMLLDPMGGIVMTNDGNAILREIQVQHPAAKSMIEISRTQDEEVGDGTTSVIILAGEMLSVAEHFLEQQMHPTVVISAYRMALDDMISTLKKISTPVDVNNREMMLSIINSSITTKVISRWSSLACNIALDAVKTVQFEENGRKEIDIKKYARVEKIPGGIIEDSCVLRGVMINKDVTHPRMRRYIKNPRIVLLDSSLEYKKGESQTDIEITREEDFTRILQMEEEYIHQLCEDIIQLKPDVVITEKGISDLAQHYLMRANVTAIRRVRKTDNNRIARACGARIVSRPEELREDDVGTGAGLLEIKKIGDEYFTFITDCKDPKACTILLRGASKEILSEVERNLQDAMQVCRNVLLDPQLVPGGGASEMAVAHALTEKSKAMTGVEQWPYRAVAQALEVIPRTLIQNCGASTIRLLTSLRAKHTQESCETWGVNGETGTLVDMKELGIWEPLAVKLQTYKTAVETAVLLLRIDDIVSGHKKKGDDQNRQTGAPDAGQE</sequence>